<evidence type="ECO:0000255" key="1">
    <source>
        <dbReference type="HAMAP-Rule" id="MF_01131"/>
    </source>
</evidence>
<protein>
    <recommendedName>
        <fullName evidence="1">Redox-sensing transcriptional repressor Rex</fullName>
    </recommendedName>
</protein>
<comment type="function">
    <text evidence="1">Modulates transcription in response to changes in cellular NADH/NAD(+) redox state.</text>
</comment>
<comment type="subunit">
    <text evidence="1">Homodimer.</text>
</comment>
<comment type="subcellular location">
    <subcellularLocation>
        <location evidence="1">Cytoplasm</location>
    </subcellularLocation>
</comment>
<comment type="similarity">
    <text evidence="1">Belongs to the transcriptional regulatory Rex family.</text>
</comment>
<dbReference type="EMBL" id="AE016879">
    <property type="protein sequence ID" value="AAP24302.1"/>
    <property type="molecule type" value="Genomic_DNA"/>
</dbReference>
<dbReference type="EMBL" id="AE017334">
    <property type="protein sequence ID" value="AAT29347.1"/>
    <property type="molecule type" value="Genomic_DNA"/>
</dbReference>
<dbReference type="EMBL" id="AE017225">
    <property type="protein sequence ID" value="AAT52584.1"/>
    <property type="molecule type" value="Genomic_DNA"/>
</dbReference>
<dbReference type="RefSeq" id="NP_842816.1">
    <property type="nucleotide sequence ID" value="NC_003997.3"/>
</dbReference>
<dbReference type="RefSeq" id="WP_000437700.1">
    <property type="nucleotide sequence ID" value="NZ_WXXJ01000053.1"/>
</dbReference>
<dbReference type="RefSeq" id="YP_026533.1">
    <property type="nucleotide sequence ID" value="NC_005945.1"/>
</dbReference>
<dbReference type="SMR" id="Q81VE5"/>
<dbReference type="STRING" id="261594.GBAA_0263"/>
<dbReference type="DNASU" id="1086169"/>
<dbReference type="GeneID" id="45020317"/>
<dbReference type="KEGG" id="ban:BA_0263"/>
<dbReference type="KEGG" id="banh:HYU01_01480"/>
<dbReference type="KEGG" id="bar:GBAA_0263"/>
<dbReference type="KEGG" id="bat:BAS0249"/>
<dbReference type="PATRIC" id="fig|198094.11.peg.256"/>
<dbReference type="eggNOG" id="COG2344">
    <property type="taxonomic scope" value="Bacteria"/>
</dbReference>
<dbReference type="HOGENOM" id="CLU_061534_1_1_9"/>
<dbReference type="OMA" id="HEQRKAG"/>
<dbReference type="OrthoDB" id="9784760at2"/>
<dbReference type="Proteomes" id="UP000000427">
    <property type="component" value="Chromosome"/>
</dbReference>
<dbReference type="Proteomes" id="UP000000594">
    <property type="component" value="Chromosome"/>
</dbReference>
<dbReference type="GO" id="GO:0005737">
    <property type="term" value="C:cytoplasm"/>
    <property type="evidence" value="ECO:0007669"/>
    <property type="project" value="UniProtKB-SubCell"/>
</dbReference>
<dbReference type="GO" id="GO:0003677">
    <property type="term" value="F:DNA binding"/>
    <property type="evidence" value="ECO:0007669"/>
    <property type="project" value="UniProtKB-UniRule"/>
</dbReference>
<dbReference type="GO" id="GO:0003700">
    <property type="term" value="F:DNA-binding transcription factor activity"/>
    <property type="evidence" value="ECO:0007669"/>
    <property type="project" value="UniProtKB-UniRule"/>
</dbReference>
<dbReference type="GO" id="GO:0045892">
    <property type="term" value="P:negative regulation of DNA-templated transcription"/>
    <property type="evidence" value="ECO:0007669"/>
    <property type="project" value="InterPro"/>
</dbReference>
<dbReference type="GO" id="GO:0051775">
    <property type="term" value="P:response to redox state"/>
    <property type="evidence" value="ECO:0007669"/>
    <property type="project" value="InterPro"/>
</dbReference>
<dbReference type="Gene3D" id="3.40.50.720">
    <property type="entry name" value="NAD(P)-binding Rossmann-like Domain"/>
    <property type="match status" value="1"/>
</dbReference>
<dbReference type="Gene3D" id="1.10.10.10">
    <property type="entry name" value="Winged helix-like DNA-binding domain superfamily/Winged helix DNA-binding domain"/>
    <property type="match status" value="1"/>
</dbReference>
<dbReference type="HAMAP" id="MF_01131">
    <property type="entry name" value="Rex"/>
    <property type="match status" value="1"/>
</dbReference>
<dbReference type="InterPro" id="IPR003781">
    <property type="entry name" value="CoA-bd"/>
</dbReference>
<dbReference type="InterPro" id="IPR036291">
    <property type="entry name" value="NAD(P)-bd_dom_sf"/>
</dbReference>
<dbReference type="InterPro" id="IPR009718">
    <property type="entry name" value="Rex_DNA-bd_C_dom"/>
</dbReference>
<dbReference type="InterPro" id="IPR022876">
    <property type="entry name" value="Tscrpt_rep_Rex"/>
</dbReference>
<dbReference type="InterPro" id="IPR036388">
    <property type="entry name" value="WH-like_DNA-bd_sf"/>
</dbReference>
<dbReference type="InterPro" id="IPR036390">
    <property type="entry name" value="WH_DNA-bd_sf"/>
</dbReference>
<dbReference type="NCBIfam" id="NF003989">
    <property type="entry name" value="PRK05472.1-3"/>
    <property type="match status" value="1"/>
</dbReference>
<dbReference type="NCBIfam" id="NF003991">
    <property type="entry name" value="PRK05472.1-5"/>
    <property type="match status" value="1"/>
</dbReference>
<dbReference type="NCBIfam" id="NF003994">
    <property type="entry name" value="PRK05472.2-3"/>
    <property type="match status" value="1"/>
</dbReference>
<dbReference type="NCBIfam" id="NF003995">
    <property type="entry name" value="PRK05472.2-4"/>
    <property type="match status" value="1"/>
</dbReference>
<dbReference type="NCBIfam" id="NF003996">
    <property type="entry name" value="PRK05472.2-5"/>
    <property type="match status" value="1"/>
</dbReference>
<dbReference type="PANTHER" id="PTHR35786">
    <property type="entry name" value="REDOX-SENSING TRANSCRIPTIONAL REPRESSOR REX"/>
    <property type="match status" value="1"/>
</dbReference>
<dbReference type="PANTHER" id="PTHR35786:SF1">
    <property type="entry name" value="REDOX-SENSING TRANSCRIPTIONAL REPRESSOR REX 1"/>
    <property type="match status" value="1"/>
</dbReference>
<dbReference type="Pfam" id="PF02629">
    <property type="entry name" value="CoA_binding"/>
    <property type="match status" value="1"/>
</dbReference>
<dbReference type="Pfam" id="PF06971">
    <property type="entry name" value="Put_DNA-bind_N"/>
    <property type="match status" value="1"/>
</dbReference>
<dbReference type="SMART" id="SM00881">
    <property type="entry name" value="CoA_binding"/>
    <property type="match status" value="1"/>
</dbReference>
<dbReference type="SUPFAM" id="SSF51735">
    <property type="entry name" value="NAD(P)-binding Rossmann-fold domains"/>
    <property type="match status" value="1"/>
</dbReference>
<dbReference type="SUPFAM" id="SSF46785">
    <property type="entry name" value="Winged helix' DNA-binding domain"/>
    <property type="match status" value="1"/>
</dbReference>
<keyword id="KW-0963">Cytoplasm</keyword>
<keyword id="KW-0238">DNA-binding</keyword>
<keyword id="KW-0520">NAD</keyword>
<keyword id="KW-1185">Reference proteome</keyword>
<keyword id="KW-0678">Repressor</keyword>
<keyword id="KW-0804">Transcription</keyword>
<keyword id="KW-0805">Transcription regulation</keyword>
<name>REX_BACAN</name>
<feature type="chain" id="PRO_0000097882" description="Redox-sensing transcriptional repressor Rex">
    <location>
        <begin position="1"/>
        <end position="209"/>
    </location>
</feature>
<feature type="DNA-binding region" description="H-T-H motif" evidence="1">
    <location>
        <begin position="16"/>
        <end position="55"/>
    </location>
</feature>
<feature type="binding site" evidence="1">
    <location>
        <begin position="90"/>
        <end position="95"/>
    </location>
    <ligand>
        <name>NAD(+)</name>
        <dbReference type="ChEBI" id="CHEBI:57540"/>
    </ligand>
</feature>
<reference key="1">
    <citation type="journal article" date="2003" name="Nature">
        <title>The genome sequence of Bacillus anthracis Ames and comparison to closely related bacteria.</title>
        <authorList>
            <person name="Read T.D."/>
            <person name="Peterson S.N."/>
            <person name="Tourasse N.J."/>
            <person name="Baillie L.W."/>
            <person name="Paulsen I.T."/>
            <person name="Nelson K.E."/>
            <person name="Tettelin H."/>
            <person name="Fouts D.E."/>
            <person name="Eisen J.A."/>
            <person name="Gill S.R."/>
            <person name="Holtzapple E.K."/>
            <person name="Okstad O.A."/>
            <person name="Helgason E."/>
            <person name="Rilstone J."/>
            <person name="Wu M."/>
            <person name="Kolonay J.F."/>
            <person name="Beanan M.J."/>
            <person name="Dodson R.J."/>
            <person name="Brinkac L.M."/>
            <person name="Gwinn M.L."/>
            <person name="DeBoy R.T."/>
            <person name="Madpu R."/>
            <person name="Daugherty S.C."/>
            <person name="Durkin A.S."/>
            <person name="Haft D.H."/>
            <person name="Nelson W.C."/>
            <person name="Peterson J.D."/>
            <person name="Pop M."/>
            <person name="Khouri H.M."/>
            <person name="Radune D."/>
            <person name="Benton J.L."/>
            <person name="Mahamoud Y."/>
            <person name="Jiang L."/>
            <person name="Hance I.R."/>
            <person name="Weidman J.F."/>
            <person name="Berry K.J."/>
            <person name="Plaut R.D."/>
            <person name="Wolf A.M."/>
            <person name="Watkins K.L."/>
            <person name="Nierman W.C."/>
            <person name="Hazen A."/>
            <person name="Cline R.T."/>
            <person name="Redmond C."/>
            <person name="Thwaite J.E."/>
            <person name="White O."/>
            <person name="Salzberg S.L."/>
            <person name="Thomason B."/>
            <person name="Friedlander A.M."/>
            <person name="Koehler T.M."/>
            <person name="Hanna P.C."/>
            <person name="Kolstoe A.-B."/>
            <person name="Fraser C.M."/>
        </authorList>
    </citation>
    <scope>NUCLEOTIDE SEQUENCE [LARGE SCALE GENOMIC DNA]</scope>
    <source>
        <strain>Ames / isolate Porton</strain>
    </source>
</reference>
<reference key="2">
    <citation type="journal article" date="2009" name="J. Bacteriol.">
        <title>The complete genome sequence of Bacillus anthracis Ames 'Ancestor'.</title>
        <authorList>
            <person name="Ravel J."/>
            <person name="Jiang L."/>
            <person name="Stanley S.T."/>
            <person name="Wilson M.R."/>
            <person name="Decker R.S."/>
            <person name="Read T.D."/>
            <person name="Worsham P."/>
            <person name="Keim P.S."/>
            <person name="Salzberg S.L."/>
            <person name="Fraser-Liggett C.M."/>
            <person name="Rasko D.A."/>
        </authorList>
    </citation>
    <scope>NUCLEOTIDE SEQUENCE [LARGE SCALE GENOMIC DNA]</scope>
    <source>
        <strain>Ames ancestor</strain>
    </source>
</reference>
<reference key="3">
    <citation type="submission" date="2004-01" db="EMBL/GenBank/DDBJ databases">
        <title>Complete genome sequence of Bacillus anthracis Sterne.</title>
        <authorList>
            <person name="Brettin T.S."/>
            <person name="Bruce D."/>
            <person name="Challacombe J.F."/>
            <person name="Gilna P."/>
            <person name="Han C."/>
            <person name="Hill K."/>
            <person name="Hitchcock P."/>
            <person name="Jackson P."/>
            <person name="Keim P."/>
            <person name="Longmire J."/>
            <person name="Lucas S."/>
            <person name="Okinaka R."/>
            <person name="Richardson P."/>
            <person name="Rubin E."/>
            <person name="Tice H."/>
        </authorList>
    </citation>
    <scope>NUCLEOTIDE SEQUENCE [LARGE SCALE GENOMIC DNA]</scope>
    <source>
        <strain>Sterne</strain>
    </source>
</reference>
<sequence length="209" mass="23502">MEQQKIPQATAKRLPLYYRFIQNLSLSGKQRVSSAELSEAVKVDSATIRRDFSYFGALGKKGYGYNVNYLLSFFRETLDQDDITRVALIGVGNLGTAFLHYNFTKNNNTKIEMAFDVSEEKVGTEIGGIPVYHLDELEERLSSDIQVAILTVPATVAQSVADRLAETNVHGILNFTPARLNVSDNIRIHHIDLAVELQTLVYFLKNYPQ</sequence>
<organism>
    <name type="scientific">Bacillus anthracis</name>
    <dbReference type="NCBI Taxonomy" id="1392"/>
    <lineage>
        <taxon>Bacteria</taxon>
        <taxon>Bacillati</taxon>
        <taxon>Bacillota</taxon>
        <taxon>Bacilli</taxon>
        <taxon>Bacillales</taxon>
        <taxon>Bacillaceae</taxon>
        <taxon>Bacillus</taxon>
        <taxon>Bacillus cereus group</taxon>
    </lineage>
</organism>
<proteinExistence type="inferred from homology"/>
<gene>
    <name evidence="1" type="primary">rex</name>
    <name type="ordered locus">BA_0263</name>
    <name type="ordered locus">GBAA_0263</name>
    <name type="ordered locus">BAS0249</name>
</gene>
<accession>Q81VE5</accession>
<accession>Q6I4E7</accession>
<accession>Q6KY48</accession>